<name>CC182_MOUSE</name>
<accession>Q9D9C6</accession>
<dbReference type="EMBL" id="AK007129">
    <property type="protein sequence ID" value="BAB24866.1"/>
    <property type="molecule type" value="mRNA"/>
</dbReference>
<dbReference type="EMBL" id="AL929089">
    <property type="status" value="NOT_ANNOTATED_CDS"/>
    <property type="molecule type" value="Genomic_DNA"/>
</dbReference>
<dbReference type="CCDS" id="CCDS48881.1"/>
<dbReference type="RefSeq" id="NP_083135.1">
    <property type="nucleotide sequence ID" value="NM_028859.1"/>
</dbReference>
<dbReference type="SMR" id="Q9D9C6"/>
<dbReference type="STRING" id="10090.ENSMUSP00000036503"/>
<dbReference type="iPTMnet" id="Q9D9C6"/>
<dbReference type="PhosphoSitePlus" id="Q9D9C6"/>
<dbReference type="PaxDb" id="10090-ENSMUSP00000036503"/>
<dbReference type="ProteomicsDB" id="265297"/>
<dbReference type="Antibodypedia" id="21057">
    <property type="antibodies" value="44 antibodies from 10 providers"/>
</dbReference>
<dbReference type="Ensembl" id="ENSMUST00000037268.6">
    <property type="protein sequence ID" value="ENSMUSP00000036503.5"/>
    <property type="gene ID" value="ENSMUSG00000034031.6"/>
</dbReference>
<dbReference type="GeneID" id="74297"/>
<dbReference type="KEGG" id="mmu:74297"/>
<dbReference type="UCSC" id="uc011ych.1">
    <property type="organism name" value="mouse"/>
</dbReference>
<dbReference type="AGR" id="MGI:1921547"/>
<dbReference type="CTD" id="101927581"/>
<dbReference type="MGI" id="MGI:1921547">
    <property type="gene designation" value="Ccdc182"/>
</dbReference>
<dbReference type="VEuPathDB" id="HostDB:ENSMUSG00000034031"/>
<dbReference type="eggNOG" id="ENOG502SV1I">
    <property type="taxonomic scope" value="Eukaryota"/>
</dbReference>
<dbReference type="GeneTree" id="ENSGT00390000014787"/>
<dbReference type="HOGENOM" id="CLU_144243_0_0_1"/>
<dbReference type="InParanoid" id="Q9D9C6"/>
<dbReference type="OMA" id="ASAMCSQ"/>
<dbReference type="OrthoDB" id="9611797at2759"/>
<dbReference type="PhylomeDB" id="Q9D9C6"/>
<dbReference type="TreeFam" id="TF338305"/>
<dbReference type="BioGRID-ORCS" id="74297">
    <property type="hits" value="7 hits in 45 CRISPR screens"/>
</dbReference>
<dbReference type="PRO" id="PR:Q9D9C6"/>
<dbReference type="Proteomes" id="UP000000589">
    <property type="component" value="Chromosome 11"/>
</dbReference>
<dbReference type="RNAct" id="Q9D9C6">
    <property type="molecule type" value="protein"/>
</dbReference>
<dbReference type="Bgee" id="ENSMUSG00000034031">
    <property type="expression patterns" value="Expressed in gonad primordium and 26 other cell types or tissues"/>
</dbReference>
<dbReference type="GO" id="GO:0008585">
    <property type="term" value="P:female gonad development"/>
    <property type="evidence" value="ECO:0000270"/>
    <property type="project" value="UniProtKB"/>
</dbReference>
<dbReference type="InterPro" id="IPR031678">
    <property type="entry name" value="DUF4715"/>
</dbReference>
<dbReference type="PANTHER" id="PTHR37364">
    <property type="entry name" value="COILED-COIL DOMAIN-CONTAINING PROTEIN 182"/>
    <property type="match status" value="1"/>
</dbReference>
<dbReference type="PANTHER" id="PTHR37364:SF1">
    <property type="entry name" value="COILED-COIL DOMAIN-CONTAINING PROTEIN 182"/>
    <property type="match status" value="1"/>
</dbReference>
<dbReference type="Pfam" id="PF15835">
    <property type="entry name" value="DUF4715"/>
    <property type="match status" value="1"/>
</dbReference>
<proteinExistence type="evidence at transcript level"/>
<feature type="chain" id="PRO_0000329035" description="Coiled-coil domain-containing protein 182">
    <location>
        <begin position="1"/>
        <end position="152"/>
    </location>
</feature>
<feature type="coiled-coil region" evidence="1">
    <location>
        <begin position="46"/>
        <end position="109"/>
    </location>
</feature>
<keyword id="KW-0175">Coiled coil</keyword>
<keyword id="KW-1185">Reference proteome</keyword>
<protein>
    <recommendedName>
        <fullName>Coiled-coil domain-containing protein 182</fullName>
    </recommendedName>
</protein>
<gene>
    <name type="primary">Ccdc182</name>
</gene>
<evidence type="ECO:0000255" key="1"/>
<organism>
    <name type="scientific">Mus musculus</name>
    <name type="common">Mouse</name>
    <dbReference type="NCBI Taxonomy" id="10090"/>
    <lineage>
        <taxon>Eukaryota</taxon>
        <taxon>Metazoa</taxon>
        <taxon>Chordata</taxon>
        <taxon>Craniata</taxon>
        <taxon>Vertebrata</taxon>
        <taxon>Euteleostomi</taxon>
        <taxon>Mammalia</taxon>
        <taxon>Eutheria</taxon>
        <taxon>Euarchontoglires</taxon>
        <taxon>Glires</taxon>
        <taxon>Rodentia</taxon>
        <taxon>Myomorpha</taxon>
        <taxon>Muroidea</taxon>
        <taxon>Muridae</taxon>
        <taxon>Murinae</taxon>
        <taxon>Mus</taxon>
        <taxon>Mus</taxon>
    </lineage>
</organism>
<sequence>MEALFQAGSILMKVNTLQGKKMVESGLQSGDLSLSQSWPSYLPLPADLEILQQKVAGVQRELEDFKEEALKAIRYLEDAFCQMSGVLAQQEEQAARVKQRLREEEDRGIVRNKVLTFLLPREKQLREHCQRLENMLVRSHNPLRAIRKSQAD</sequence>
<reference key="1">
    <citation type="journal article" date="2005" name="Science">
        <title>The transcriptional landscape of the mammalian genome.</title>
        <authorList>
            <person name="Carninci P."/>
            <person name="Kasukawa T."/>
            <person name="Katayama S."/>
            <person name="Gough J."/>
            <person name="Frith M.C."/>
            <person name="Maeda N."/>
            <person name="Oyama R."/>
            <person name="Ravasi T."/>
            <person name="Lenhard B."/>
            <person name="Wells C."/>
            <person name="Kodzius R."/>
            <person name="Shimokawa K."/>
            <person name="Bajic V.B."/>
            <person name="Brenner S.E."/>
            <person name="Batalov S."/>
            <person name="Forrest A.R."/>
            <person name="Zavolan M."/>
            <person name="Davis M.J."/>
            <person name="Wilming L.G."/>
            <person name="Aidinis V."/>
            <person name="Allen J.E."/>
            <person name="Ambesi-Impiombato A."/>
            <person name="Apweiler R."/>
            <person name="Aturaliya R.N."/>
            <person name="Bailey T.L."/>
            <person name="Bansal M."/>
            <person name="Baxter L."/>
            <person name="Beisel K.W."/>
            <person name="Bersano T."/>
            <person name="Bono H."/>
            <person name="Chalk A.M."/>
            <person name="Chiu K.P."/>
            <person name="Choudhary V."/>
            <person name="Christoffels A."/>
            <person name="Clutterbuck D.R."/>
            <person name="Crowe M.L."/>
            <person name="Dalla E."/>
            <person name="Dalrymple B.P."/>
            <person name="de Bono B."/>
            <person name="Della Gatta G."/>
            <person name="di Bernardo D."/>
            <person name="Down T."/>
            <person name="Engstrom P."/>
            <person name="Fagiolini M."/>
            <person name="Faulkner G."/>
            <person name="Fletcher C.F."/>
            <person name="Fukushima T."/>
            <person name="Furuno M."/>
            <person name="Futaki S."/>
            <person name="Gariboldi M."/>
            <person name="Georgii-Hemming P."/>
            <person name="Gingeras T.R."/>
            <person name="Gojobori T."/>
            <person name="Green R.E."/>
            <person name="Gustincich S."/>
            <person name="Harbers M."/>
            <person name="Hayashi Y."/>
            <person name="Hensch T.K."/>
            <person name="Hirokawa N."/>
            <person name="Hill D."/>
            <person name="Huminiecki L."/>
            <person name="Iacono M."/>
            <person name="Ikeo K."/>
            <person name="Iwama A."/>
            <person name="Ishikawa T."/>
            <person name="Jakt M."/>
            <person name="Kanapin A."/>
            <person name="Katoh M."/>
            <person name="Kawasawa Y."/>
            <person name="Kelso J."/>
            <person name="Kitamura H."/>
            <person name="Kitano H."/>
            <person name="Kollias G."/>
            <person name="Krishnan S.P."/>
            <person name="Kruger A."/>
            <person name="Kummerfeld S.K."/>
            <person name="Kurochkin I.V."/>
            <person name="Lareau L.F."/>
            <person name="Lazarevic D."/>
            <person name="Lipovich L."/>
            <person name="Liu J."/>
            <person name="Liuni S."/>
            <person name="McWilliam S."/>
            <person name="Madan Babu M."/>
            <person name="Madera M."/>
            <person name="Marchionni L."/>
            <person name="Matsuda H."/>
            <person name="Matsuzawa S."/>
            <person name="Miki H."/>
            <person name="Mignone F."/>
            <person name="Miyake S."/>
            <person name="Morris K."/>
            <person name="Mottagui-Tabar S."/>
            <person name="Mulder N."/>
            <person name="Nakano N."/>
            <person name="Nakauchi H."/>
            <person name="Ng P."/>
            <person name="Nilsson R."/>
            <person name="Nishiguchi S."/>
            <person name="Nishikawa S."/>
            <person name="Nori F."/>
            <person name="Ohara O."/>
            <person name="Okazaki Y."/>
            <person name="Orlando V."/>
            <person name="Pang K.C."/>
            <person name="Pavan W.J."/>
            <person name="Pavesi G."/>
            <person name="Pesole G."/>
            <person name="Petrovsky N."/>
            <person name="Piazza S."/>
            <person name="Reed J."/>
            <person name="Reid J.F."/>
            <person name="Ring B.Z."/>
            <person name="Ringwald M."/>
            <person name="Rost B."/>
            <person name="Ruan Y."/>
            <person name="Salzberg S.L."/>
            <person name="Sandelin A."/>
            <person name="Schneider C."/>
            <person name="Schoenbach C."/>
            <person name="Sekiguchi K."/>
            <person name="Semple C.A."/>
            <person name="Seno S."/>
            <person name="Sessa L."/>
            <person name="Sheng Y."/>
            <person name="Shibata Y."/>
            <person name="Shimada H."/>
            <person name="Shimada K."/>
            <person name="Silva D."/>
            <person name="Sinclair B."/>
            <person name="Sperling S."/>
            <person name="Stupka E."/>
            <person name="Sugiura K."/>
            <person name="Sultana R."/>
            <person name="Takenaka Y."/>
            <person name="Taki K."/>
            <person name="Tammoja K."/>
            <person name="Tan S.L."/>
            <person name="Tang S."/>
            <person name="Taylor M.S."/>
            <person name="Tegner J."/>
            <person name="Teichmann S.A."/>
            <person name="Ueda H.R."/>
            <person name="van Nimwegen E."/>
            <person name="Verardo R."/>
            <person name="Wei C.L."/>
            <person name="Yagi K."/>
            <person name="Yamanishi H."/>
            <person name="Zabarovsky E."/>
            <person name="Zhu S."/>
            <person name="Zimmer A."/>
            <person name="Hide W."/>
            <person name="Bult C."/>
            <person name="Grimmond S.M."/>
            <person name="Teasdale R.D."/>
            <person name="Liu E.T."/>
            <person name="Brusic V."/>
            <person name="Quackenbush J."/>
            <person name="Wahlestedt C."/>
            <person name="Mattick J.S."/>
            <person name="Hume D.A."/>
            <person name="Kai C."/>
            <person name="Sasaki D."/>
            <person name="Tomaru Y."/>
            <person name="Fukuda S."/>
            <person name="Kanamori-Katayama M."/>
            <person name="Suzuki M."/>
            <person name="Aoki J."/>
            <person name="Arakawa T."/>
            <person name="Iida J."/>
            <person name="Imamura K."/>
            <person name="Itoh M."/>
            <person name="Kato T."/>
            <person name="Kawaji H."/>
            <person name="Kawagashira N."/>
            <person name="Kawashima T."/>
            <person name="Kojima M."/>
            <person name="Kondo S."/>
            <person name="Konno H."/>
            <person name="Nakano K."/>
            <person name="Ninomiya N."/>
            <person name="Nishio T."/>
            <person name="Okada M."/>
            <person name="Plessy C."/>
            <person name="Shibata K."/>
            <person name="Shiraki T."/>
            <person name="Suzuki S."/>
            <person name="Tagami M."/>
            <person name="Waki K."/>
            <person name="Watahiki A."/>
            <person name="Okamura-Oho Y."/>
            <person name="Suzuki H."/>
            <person name="Kawai J."/>
            <person name="Hayashizaki Y."/>
        </authorList>
    </citation>
    <scope>NUCLEOTIDE SEQUENCE [LARGE SCALE MRNA]</scope>
    <source>
        <strain>C57BL/6J</strain>
        <tissue>Testis</tissue>
    </source>
</reference>
<reference key="2">
    <citation type="journal article" date="2009" name="PLoS Biol.">
        <title>Lineage-specific biology revealed by a finished genome assembly of the mouse.</title>
        <authorList>
            <person name="Church D.M."/>
            <person name="Goodstadt L."/>
            <person name="Hillier L.W."/>
            <person name="Zody M.C."/>
            <person name="Goldstein S."/>
            <person name="She X."/>
            <person name="Bult C.J."/>
            <person name="Agarwala R."/>
            <person name="Cherry J.L."/>
            <person name="DiCuccio M."/>
            <person name="Hlavina W."/>
            <person name="Kapustin Y."/>
            <person name="Meric P."/>
            <person name="Maglott D."/>
            <person name="Birtle Z."/>
            <person name="Marques A.C."/>
            <person name="Graves T."/>
            <person name="Zhou S."/>
            <person name="Teague B."/>
            <person name="Potamousis K."/>
            <person name="Churas C."/>
            <person name="Place M."/>
            <person name="Herschleb J."/>
            <person name="Runnheim R."/>
            <person name="Forrest D."/>
            <person name="Amos-Landgraf J."/>
            <person name="Schwartz D.C."/>
            <person name="Cheng Z."/>
            <person name="Lindblad-Toh K."/>
            <person name="Eichler E.E."/>
            <person name="Ponting C.P."/>
        </authorList>
    </citation>
    <scope>NUCLEOTIDE SEQUENCE [LARGE SCALE GENOMIC DNA]</scope>
    <source>
        <strain>C57BL/6J</strain>
    </source>
</reference>